<keyword id="KW-0028">Amino-acid biosynthesis</keyword>
<keyword id="KW-0032">Aminotransferase</keyword>
<keyword id="KW-0368">Histidine biosynthesis</keyword>
<keyword id="KW-0663">Pyridoxal phosphate</keyword>
<keyword id="KW-1185">Reference proteome</keyword>
<keyword id="KW-0808">Transferase</keyword>
<gene>
    <name evidence="1" type="primary">hisC</name>
    <name type="ordered locus">Geob_0416</name>
</gene>
<feature type="chain" id="PRO_1000149097" description="Histidinol-phosphate aminotransferase">
    <location>
        <begin position="1"/>
        <end position="347"/>
    </location>
</feature>
<feature type="modified residue" description="N6-(pyridoxal phosphate)lysine" evidence="1">
    <location>
        <position position="209"/>
    </location>
</feature>
<protein>
    <recommendedName>
        <fullName evidence="1">Histidinol-phosphate aminotransferase</fullName>
        <ecNumber evidence="1">2.6.1.9</ecNumber>
    </recommendedName>
    <alternativeName>
        <fullName evidence="1">Imidazole acetol-phosphate transaminase</fullName>
    </alternativeName>
</protein>
<comment type="catalytic activity">
    <reaction evidence="1">
        <text>L-histidinol phosphate + 2-oxoglutarate = 3-(imidazol-4-yl)-2-oxopropyl phosphate + L-glutamate</text>
        <dbReference type="Rhea" id="RHEA:23744"/>
        <dbReference type="ChEBI" id="CHEBI:16810"/>
        <dbReference type="ChEBI" id="CHEBI:29985"/>
        <dbReference type="ChEBI" id="CHEBI:57766"/>
        <dbReference type="ChEBI" id="CHEBI:57980"/>
        <dbReference type="EC" id="2.6.1.9"/>
    </reaction>
</comment>
<comment type="cofactor">
    <cofactor evidence="1">
        <name>pyridoxal 5'-phosphate</name>
        <dbReference type="ChEBI" id="CHEBI:597326"/>
    </cofactor>
</comment>
<comment type="pathway">
    <text evidence="1">Amino-acid biosynthesis; L-histidine biosynthesis; L-histidine from 5-phospho-alpha-D-ribose 1-diphosphate: step 7/9.</text>
</comment>
<comment type="subunit">
    <text evidence="1">Homodimer.</text>
</comment>
<comment type="similarity">
    <text evidence="1">Belongs to the class-II pyridoxal-phosphate-dependent aminotransferase family. Histidinol-phosphate aminotransferase subfamily.</text>
</comment>
<evidence type="ECO:0000255" key="1">
    <source>
        <dbReference type="HAMAP-Rule" id="MF_01023"/>
    </source>
</evidence>
<dbReference type="EC" id="2.6.1.9" evidence="1"/>
<dbReference type="EMBL" id="CP001390">
    <property type="protein sequence ID" value="ACM18785.1"/>
    <property type="molecule type" value="Genomic_DNA"/>
</dbReference>
<dbReference type="RefSeq" id="WP_012645514.1">
    <property type="nucleotide sequence ID" value="NC_011979.1"/>
</dbReference>
<dbReference type="SMR" id="B9LZ53"/>
<dbReference type="STRING" id="316067.Geob_0416"/>
<dbReference type="KEGG" id="geo:Geob_0416"/>
<dbReference type="eggNOG" id="COG0079">
    <property type="taxonomic scope" value="Bacteria"/>
</dbReference>
<dbReference type="HOGENOM" id="CLU_017584_3_0_7"/>
<dbReference type="OrthoDB" id="9813612at2"/>
<dbReference type="UniPathway" id="UPA00031">
    <property type="reaction ID" value="UER00012"/>
</dbReference>
<dbReference type="Proteomes" id="UP000007721">
    <property type="component" value="Chromosome"/>
</dbReference>
<dbReference type="GO" id="GO:0004400">
    <property type="term" value="F:histidinol-phosphate transaminase activity"/>
    <property type="evidence" value="ECO:0007669"/>
    <property type="project" value="UniProtKB-UniRule"/>
</dbReference>
<dbReference type="GO" id="GO:0030170">
    <property type="term" value="F:pyridoxal phosphate binding"/>
    <property type="evidence" value="ECO:0007669"/>
    <property type="project" value="InterPro"/>
</dbReference>
<dbReference type="GO" id="GO:0000105">
    <property type="term" value="P:L-histidine biosynthetic process"/>
    <property type="evidence" value="ECO:0007669"/>
    <property type="project" value="UniProtKB-UniRule"/>
</dbReference>
<dbReference type="CDD" id="cd00609">
    <property type="entry name" value="AAT_like"/>
    <property type="match status" value="1"/>
</dbReference>
<dbReference type="Gene3D" id="3.90.1150.10">
    <property type="entry name" value="Aspartate Aminotransferase, domain 1"/>
    <property type="match status" value="1"/>
</dbReference>
<dbReference type="Gene3D" id="3.40.640.10">
    <property type="entry name" value="Type I PLP-dependent aspartate aminotransferase-like (Major domain)"/>
    <property type="match status" value="1"/>
</dbReference>
<dbReference type="HAMAP" id="MF_01023">
    <property type="entry name" value="HisC_aminotrans_2"/>
    <property type="match status" value="1"/>
</dbReference>
<dbReference type="InterPro" id="IPR001917">
    <property type="entry name" value="Aminotrans_II_pyridoxalP_BS"/>
</dbReference>
<dbReference type="InterPro" id="IPR004839">
    <property type="entry name" value="Aminotransferase_I/II_large"/>
</dbReference>
<dbReference type="InterPro" id="IPR005861">
    <property type="entry name" value="HisP_aminotrans"/>
</dbReference>
<dbReference type="InterPro" id="IPR015424">
    <property type="entry name" value="PyrdxlP-dep_Trfase"/>
</dbReference>
<dbReference type="InterPro" id="IPR015421">
    <property type="entry name" value="PyrdxlP-dep_Trfase_major"/>
</dbReference>
<dbReference type="InterPro" id="IPR015422">
    <property type="entry name" value="PyrdxlP-dep_Trfase_small"/>
</dbReference>
<dbReference type="NCBIfam" id="TIGR01141">
    <property type="entry name" value="hisC"/>
    <property type="match status" value="1"/>
</dbReference>
<dbReference type="PANTHER" id="PTHR42885:SF2">
    <property type="entry name" value="HISTIDINOL-PHOSPHATE AMINOTRANSFERASE"/>
    <property type="match status" value="1"/>
</dbReference>
<dbReference type="PANTHER" id="PTHR42885">
    <property type="entry name" value="HISTIDINOL-PHOSPHATE AMINOTRANSFERASE-RELATED"/>
    <property type="match status" value="1"/>
</dbReference>
<dbReference type="Pfam" id="PF00155">
    <property type="entry name" value="Aminotran_1_2"/>
    <property type="match status" value="1"/>
</dbReference>
<dbReference type="SUPFAM" id="SSF53383">
    <property type="entry name" value="PLP-dependent transferases"/>
    <property type="match status" value="1"/>
</dbReference>
<dbReference type="PROSITE" id="PS00599">
    <property type="entry name" value="AA_TRANSFER_CLASS_2"/>
    <property type="match status" value="1"/>
</dbReference>
<organism>
    <name type="scientific">Geotalea daltonii (strain DSM 22248 / JCM 15807 / FRC-32)</name>
    <name type="common">Geobacter daltonii</name>
    <dbReference type="NCBI Taxonomy" id="316067"/>
    <lineage>
        <taxon>Bacteria</taxon>
        <taxon>Pseudomonadati</taxon>
        <taxon>Thermodesulfobacteriota</taxon>
        <taxon>Desulfuromonadia</taxon>
        <taxon>Geobacterales</taxon>
        <taxon>Geobacteraceae</taxon>
        <taxon>Geotalea</taxon>
    </lineage>
</organism>
<sequence length="347" mass="38782">MIKLRKNIANMAGYVPGYQPEDPAAYIKLNTNENSYPPSPKVIEAIIAEVGEGLKRYPDAASRAAREAAAELYGFPPEWVIMANGSDEVLNNLIRAFADEGDEIAFVYPSYSYYATLAEVQGARVKTFGLTEDWKLKDFPKIYEGRIFFLTNPNAPLGFTFSQTYIEELAGRVSGTLVIDETYADFAEVTSLELVRKYDNVVVTRTFSKSYSLAGMRLGLAVARPEVISALDKIRDHYNLDRLAQAAAVAALHDQEYLRETVGKIQETRQWFCDQLGKLGYTVIPSHGNYVFATPPDRNGERIYQGLFDRKILVRHFSDPNLAHGLRISIGTQAEMEKTIVALVEIG</sequence>
<proteinExistence type="inferred from homology"/>
<name>HIS8_GEODF</name>
<accession>B9LZ53</accession>
<reference key="1">
    <citation type="submission" date="2009-01" db="EMBL/GenBank/DDBJ databases">
        <title>Complete sequence of Geobacter sp. FRC-32.</title>
        <authorList>
            <consortium name="US DOE Joint Genome Institute"/>
            <person name="Lucas S."/>
            <person name="Copeland A."/>
            <person name="Lapidus A."/>
            <person name="Glavina del Rio T."/>
            <person name="Dalin E."/>
            <person name="Tice H."/>
            <person name="Bruce D."/>
            <person name="Goodwin L."/>
            <person name="Pitluck S."/>
            <person name="Saunders E."/>
            <person name="Brettin T."/>
            <person name="Detter J.C."/>
            <person name="Han C."/>
            <person name="Larimer F."/>
            <person name="Land M."/>
            <person name="Hauser L."/>
            <person name="Kyrpides N."/>
            <person name="Ovchinnikova G."/>
            <person name="Kostka J."/>
            <person name="Richardson P."/>
        </authorList>
    </citation>
    <scope>NUCLEOTIDE SEQUENCE [LARGE SCALE GENOMIC DNA]</scope>
    <source>
        <strain>DSM 22248 / JCM 15807 / FRC-32</strain>
    </source>
</reference>